<proteinExistence type="inferred from homology"/>
<evidence type="ECO:0000255" key="1">
    <source>
        <dbReference type="HAMAP-Rule" id="MF_01576"/>
    </source>
</evidence>
<feature type="chain" id="PRO_1000196782" description="Bifunctional protein FolD">
    <location>
        <begin position="1"/>
        <end position="275"/>
    </location>
</feature>
<feature type="binding site" evidence="1">
    <location>
        <begin position="161"/>
        <end position="163"/>
    </location>
    <ligand>
        <name>NADP(+)</name>
        <dbReference type="ChEBI" id="CHEBI:58349"/>
    </ligand>
</feature>
<feature type="binding site" evidence="1">
    <location>
        <position position="186"/>
    </location>
    <ligand>
        <name>NADP(+)</name>
        <dbReference type="ChEBI" id="CHEBI:58349"/>
    </ligand>
</feature>
<feature type="binding site" evidence="1">
    <location>
        <position position="227"/>
    </location>
    <ligand>
        <name>NADP(+)</name>
        <dbReference type="ChEBI" id="CHEBI:58349"/>
    </ligand>
</feature>
<sequence>MRLLDGRSMAADIGRSVVDDVERLATTGVTPTLAVVLPTADEAARSYVRVIERGAAKVGVGCAVHELTGDPDELTATVDRLAADPAVHGMIVQTPLPDGLTAADVGARIPVGKDVDGMNPLSLGRLALGLPAFAPATAAAVLEILNRAAVPLAGARACVIGRSSVVGKPAALLLLAEDATVTVCHSRTKDLATVAHDADIVVAAVGRPKMVGAGHVRPGAVVIDVGTNWTDAGLVGDVDADAVAPVAGALTPVPGGVGPVTTMLLLRNTVRAAGG</sequence>
<keyword id="KW-0028">Amino-acid biosynthesis</keyword>
<keyword id="KW-0368">Histidine biosynthesis</keyword>
<keyword id="KW-0378">Hydrolase</keyword>
<keyword id="KW-0486">Methionine biosynthesis</keyword>
<keyword id="KW-0511">Multifunctional enzyme</keyword>
<keyword id="KW-0521">NADP</keyword>
<keyword id="KW-0554">One-carbon metabolism</keyword>
<keyword id="KW-0560">Oxidoreductase</keyword>
<keyword id="KW-0658">Purine biosynthesis</keyword>
<name>FOLD_PARS2</name>
<comment type="function">
    <text evidence="1">Catalyzes the oxidation of 5,10-methylenetetrahydrofolate to 5,10-methenyltetrahydrofolate and then the hydrolysis of 5,10-methenyltetrahydrofolate to 10-formyltetrahydrofolate.</text>
</comment>
<comment type="catalytic activity">
    <reaction evidence="1">
        <text>(6R)-5,10-methylene-5,6,7,8-tetrahydrofolate + NADP(+) = (6R)-5,10-methenyltetrahydrofolate + NADPH</text>
        <dbReference type="Rhea" id="RHEA:22812"/>
        <dbReference type="ChEBI" id="CHEBI:15636"/>
        <dbReference type="ChEBI" id="CHEBI:57455"/>
        <dbReference type="ChEBI" id="CHEBI:57783"/>
        <dbReference type="ChEBI" id="CHEBI:58349"/>
        <dbReference type="EC" id="1.5.1.5"/>
    </reaction>
</comment>
<comment type="catalytic activity">
    <reaction evidence="1">
        <text>(6R)-5,10-methenyltetrahydrofolate + H2O = (6R)-10-formyltetrahydrofolate + H(+)</text>
        <dbReference type="Rhea" id="RHEA:23700"/>
        <dbReference type="ChEBI" id="CHEBI:15377"/>
        <dbReference type="ChEBI" id="CHEBI:15378"/>
        <dbReference type="ChEBI" id="CHEBI:57455"/>
        <dbReference type="ChEBI" id="CHEBI:195366"/>
        <dbReference type="EC" id="3.5.4.9"/>
    </reaction>
</comment>
<comment type="pathway">
    <text evidence="1">One-carbon metabolism; tetrahydrofolate interconversion.</text>
</comment>
<comment type="subunit">
    <text evidence="1">Homodimer.</text>
</comment>
<comment type="similarity">
    <text evidence="1">Belongs to the tetrahydrofolate dehydrogenase/cyclohydrolase family.</text>
</comment>
<dbReference type="EC" id="1.5.1.5" evidence="1"/>
<dbReference type="EC" id="3.5.4.9" evidence="1"/>
<dbReference type="EMBL" id="CP000820">
    <property type="protein sequence ID" value="ABW13567.1"/>
    <property type="molecule type" value="Genomic_DNA"/>
</dbReference>
<dbReference type="RefSeq" id="WP_020461701.1">
    <property type="nucleotide sequence ID" value="NC_009921.1"/>
</dbReference>
<dbReference type="SMR" id="A8L893"/>
<dbReference type="STRING" id="298653.Franean1_4183"/>
<dbReference type="KEGG" id="fre:Franean1_4183"/>
<dbReference type="eggNOG" id="COG0190">
    <property type="taxonomic scope" value="Bacteria"/>
</dbReference>
<dbReference type="HOGENOM" id="CLU_034045_2_1_11"/>
<dbReference type="UniPathway" id="UPA00193"/>
<dbReference type="GO" id="GO:0005829">
    <property type="term" value="C:cytosol"/>
    <property type="evidence" value="ECO:0007669"/>
    <property type="project" value="TreeGrafter"/>
</dbReference>
<dbReference type="GO" id="GO:0004477">
    <property type="term" value="F:methenyltetrahydrofolate cyclohydrolase activity"/>
    <property type="evidence" value="ECO:0007669"/>
    <property type="project" value="UniProtKB-UniRule"/>
</dbReference>
<dbReference type="GO" id="GO:0004488">
    <property type="term" value="F:methylenetetrahydrofolate dehydrogenase (NADP+) activity"/>
    <property type="evidence" value="ECO:0007669"/>
    <property type="project" value="UniProtKB-UniRule"/>
</dbReference>
<dbReference type="GO" id="GO:0000105">
    <property type="term" value="P:L-histidine biosynthetic process"/>
    <property type="evidence" value="ECO:0007669"/>
    <property type="project" value="UniProtKB-KW"/>
</dbReference>
<dbReference type="GO" id="GO:0009086">
    <property type="term" value="P:methionine biosynthetic process"/>
    <property type="evidence" value="ECO:0007669"/>
    <property type="project" value="UniProtKB-KW"/>
</dbReference>
<dbReference type="GO" id="GO:0006164">
    <property type="term" value="P:purine nucleotide biosynthetic process"/>
    <property type="evidence" value="ECO:0007669"/>
    <property type="project" value="UniProtKB-KW"/>
</dbReference>
<dbReference type="GO" id="GO:0035999">
    <property type="term" value="P:tetrahydrofolate interconversion"/>
    <property type="evidence" value="ECO:0007669"/>
    <property type="project" value="UniProtKB-UniRule"/>
</dbReference>
<dbReference type="CDD" id="cd01080">
    <property type="entry name" value="NAD_bind_m-THF_DH_Cyclohyd"/>
    <property type="match status" value="1"/>
</dbReference>
<dbReference type="Gene3D" id="3.40.50.10860">
    <property type="entry name" value="Leucine Dehydrogenase, chain A, domain 1"/>
    <property type="match status" value="1"/>
</dbReference>
<dbReference type="Gene3D" id="3.40.50.720">
    <property type="entry name" value="NAD(P)-binding Rossmann-like Domain"/>
    <property type="match status" value="1"/>
</dbReference>
<dbReference type="HAMAP" id="MF_01576">
    <property type="entry name" value="THF_DHG_CYH"/>
    <property type="match status" value="1"/>
</dbReference>
<dbReference type="InterPro" id="IPR046346">
    <property type="entry name" value="Aminoacid_DH-like_N_sf"/>
</dbReference>
<dbReference type="InterPro" id="IPR036291">
    <property type="entry name" value="NAD(P)-bd_dom_sf"/>
</dbReference>
<dbReference type="InterPro" id="IPR000672">
    <property type="entry name" value="THF_DH/CycHdrlase"/>
</dbReference>
<dbReference type="InterPro" id="IPR020630">
    <property type="entry name" value="THF_DH/CycHdrlase_cat_dom"/>
</dbReference>
<dbReference type="InterPro" id="IPR020631">
    <property type="entry name" value="THF_DH/CycHdrlase_NAD-bd_dom"/>
</dbReference>
<dbReference type="PANTHER" id="PTHR48099:SF5">
    <property type="entry name" value="C-1-TETRAHYDROFOLATE SYNTHASE, CYTOPLASMIC"/>
    <property type="match status" value="1"/>
</dbReference>
<dbReference type="PANTHER" id="PTHR48099">
    <property type="entry name" value="C-1-TETRAHYDROFOLATE SYNTHASE, CYTOPLASMIC-RELATED"/>
    <property type="match status" value="1"/>
</dbReference>
<dbReference type="Pfam" id="PF00763">
    <property type="entry name" value="THF_DHG_CYH"/>
    <property type="match status" value="1"/>
</dbReference>
<dbReference type="Pfam" id="PF02882">
    <property type="entry name" value="THF_DHG_CYH_C"/>
    <property type="match status" value="1"/>
</dbReference>
<dbReference type="PRINTS" id="PR00085">
    <property type="entry name" value="THFDHDRGNASE"/>
</dbReference>
<dbReference type="SUPFAM" id="SSF53223">
    <property type="entry name" value="Aminoacid dehydrogenase-like, N-terminal domain"/>
    <property type="match status" value="1"/>
</dbReference>
<dbReference type="SUPFAM" id="SSF51735">
    <property type="entry name" value="NAD(P)-binding Rossmann-fold domains"/>
    <property type="match status" value="1"/>
</dbReference>
<organism>
    <name type="scientific">Parafrankia sp. (strain EAN1pec)</name>
    <dbReference type="NCBI Taxonomy" id="298653"/>
    <lineage>
        <taxon>Bacteria</taxon>
        <taxon>Bacillati</taxon>
        <taxon>Actinomycetota</taxon>
        <taxon>Actinomycetes</taxon>
        <taxon>Frankiales</taxon>
        <taxon>Frankiaceae</taxon>
        <taxon>Parafrankia</taxon>
    </lineage>
</organism>
<reference key="1">
    <citation type="journal article" date="2007" name="Genome Res.">
        <title>Genome characteristics of facultatively symbiotic Frankia sp. strains reflect host range and host plant biogeography.</title>
        <authorList>
            <person name="Normand P."/>
            <person name="Lapierre P."/>
            <person name="Tisa L.S."/>
            <person name="Gogarten J.P."/>
            <person name="Alloisio N."/>
            <person name="Bagnarol E."/>
            <person name="Bassi C.A."/>
            <person name="Berry A.M."/>
            <person name="Bickhart D.M."/>
            <person name="Choisne N."/>
            <person name="Couloux A."/>
            <person name="Cournoyer B."/>
            <person name="Cruveiller S."/>
            <person name="Daubin V."/>
            <person name="Demange N."/>
            <person name="Francino M.P."/>
            <person name="Goltsman E."/>
            <person name="Huang Y."/>
            <person name="Kopp O.R."/>
            <person name="Labarre L."/>
            <person name="Lapidus A."/>
            <person name="Lavire C."/>
            <person name="Marechal J."/>
            <person name="Martinez M."/>
            <person name="Mastronunzio J.E."/>
            <person name="Mullin B.C."/>
            <person name="Niemann J."/>
            <person name="Pujic P."/>
            <person name="Rawnsley T."/>
            <person name="Rouy Z."/>
            <person name="Schenowitz C."/>
            <person name="Sellstedt A."/>
            <person name="Tavares F."/>
            <person name="Tomkins J.P."/>
            <person name="Vallenet D."/>
            <person name="Valverde C."/>
            <person name="Wall L.G."/>
            <person name="Wang Y."/>
            <person name="Medigue C."/>
            <person name="Benson D.R."/>
        </authorList>
    </citation>
    <scope>NUCLEOTIDE SEQUENCE [LARGE SCALE GENOMIC DNA]</scope>
    <source>
        <strain>EAN1pec</strain>
    </source>
</reference>
<gene>
    <name evidence="1" type="primary">folD</name>
    <name type="ordered locus">Franean1_4183</name>
</gene>
<protein>
    <recommendedName>
        <fullName evidence="1">Bifunctional protein FolD</fullName>
    </recommendedName>
    <domain>
        <recommendedName>
            <fullName evidence="1">Methylenetetrahydrofolate dehydrogenase</fullName>
            <ecNumber evidence="1">1.5.1.5</ecNumber>
        </recommendedName>
    </domain>
    <domain>
        <recommendedName>
            <fullName evidence="1">Methenyltetrahydrofolate cyclohydrolase</fullName>
            <ecNumber evidence="1">3.5.4.9</ecNumber>
        </recommendedName>
    </domain>
</protein>
<accession>A8L893</accession>